<comment type="function">
    <text evidence="1">Involved in storage lipid mobilization during the growth of higher plant seedling.</text>
</comment>
<comment type="catalytic activity">
    <reaction evidence="1">
        <text>D-threo-isocitrate = glyoxylate + succinate</text>
        <dbReference type="Rhea" id="RHEA:13245"/>
        <dbReference type="ChEBI" id="CHEBI:15562"/>
        <dbReference type="ChEBI" id="CHEBI:30031"/>
        <dbReference type="ChEBI" id="CHEBI:36655"/>
        <dbReference type="EC" id="4.1.3.1"/>
    </reaction>
</comment>
<comment type="cofactor">
    <cofactor evidence="2">
        <name>Mg(2+)</name>
        <dbReference type="ChEBI" id="CHEBI:18420"/>
    </cofactor>
</comment>
<comment type="pathway">
    <text evidence="1">Carbohydrate metabolism; glyoxylate cycle; (S)-malate from isocitrate: step 1/2.</text>
</comment>
<comment type="subunit">
    <text evidence="1">Homotetramer.</text>
</comment>
<comment type="subcellular location">
    <subcellularLocation>
        <location evidence="1">Glyoxysome</location>
    </subcellularLocation>
</comment>
<comment type="similarity">
    <text evidence="4">Belongs to the isocitrate lyase/PEP mutase superfamily. Isocitrate lyase family.</text>
</comment>
<feature type="chain" id="PRO_0000068803" description="Isocitrate lyase">
    <location>
        <begin position="1"/>
        <end position="576"/>
    </location>
</feature>
<feature type="short sequence motif" description="Microbody targeting signal" evidence="3">
    <location>
        <begin position="574"/>
        <end position="576"/>
    </location>
</feature>
<feature type="active site" description="Proton acceptor" evidence="2">
    <location>
        <position position="213"/>
    </location>
</feature>
<feature type="binding site" evidence="2">
    <location>
        <begin position="104"/>
        <end position="106"/>
    </location>
    <ligand>
        <name>substrate</name>
    </ligand>
</feature>
<feature type="binding site" evidence="2">
    <location>
        <position position="175"/>
    </location>
    <ligand>
        <name>Mg(2+)</name>
        <dbReference type="ChEBI" id="CHEBI:18420"/>
    </ligand>
</feature>
<feature type="binding site" evidence="2">
    <location>
        <begin position="214"/>
        <end position="215"/>
    </location>
    <ligand>
        <name>substrate</name>
    </ligand>
</feature>
<feature type="binding site" evidence="2">
    <location>
        <position position="250"/>
    </location>
    <ligand>
        <name>substrate</name>
    </ligand>
</feature>
<feature type="binding site" evidence="2">
    <location>
        <begin position="437"/>
        <end position="441"/>
    </location>
    <ligand>
        <name>substrate</name>
    </ligand>
</feature>
<feature type="binding site" evidence="2">
    <location>
        <position position="472"/>
    </location>
    <ligand>
        <name>substrate</name>
    </ligand>
</feature>
<evidence type="ECO:0000250" key="1">
    <source>
        <dbReference type="UniProtKB" id="P28297"/>
    </source>
</evidence>
<evidence type="ECO:0000250" key="2">
    <source>
        <dbReference type="UniProtKB" id="P9WKK7"/>
    </source>
</evidence>
<evidence type="ECO:0000255" key="3"/>
<evidence type="ECO:0000305" key="4"/>
<protein>
    <recommendedName>
        <fullName evidence="1">Isocitrate lyase</fullName>
        <shortName evidence="1">ICL</shortName>
        <ecNumber evidence="1">4.1.3.1</ecNumber>
    </recommendedName>
    <alternativeName>
        <fullName evidence="1">Isocitrase</fullName>
    </alternativeName>
    <alternativeName>
        <fullName evidence="1">Isocitratsysase</fullName>
    </alternativeName>
</protein>
<proteinExistence type="evidence at transcript level"/>
<reference key="1">
    <citation type="journal article" date="1996" name="Plant Cell Physiol.">
        <title>cDNA cloning and expression of a gene for isocitrate lyase in pumpkin cotyledons.</title>
        <authorList>
            <person name="Mano S."/>
            <person name="Hayashi M."/>
            <person name="Kondo M."/>
            <person name="Nishimura M."/>
        </authorList>
    </citation>
    <scope>NUCLEOTIDE SEQUENCE [MRNA]</scope>
    <source>
        <tissue>Cotyledon</tissue>
    </source>
</reference>
<organism>
    <name type="scientific">Cucurbita maxima</name>
    <name type="common">Pumpkin</name>
    <name type="synonym">Winter squash</name>
    <dbReference type="NCBI Taxonomy" id="3661"/>
    <lineage>
        <taxon>Eukaryota</taxon>
        <taxon>Viridiplantae</taxon>
        <taxon>Streptophyta</taxon>
        <taxon>Embryophyta</taxon>
        <taxon>Tracheophyta</taxon>
        <taxon>Spermatophyta</taxon>
        <taxon>Magnoliopsida</taxon>
        <taxon>eudicotyledons</taxon>
        <taxon>Gunneridae</taxon>
        <taxon>Pentapetalae</taxon>
        <taxon>rosids</taxon>
        <taxon>fabids</taxon>
        <taxon>Cucurbitales</taxon>
        <taxon>Cucurbitaceae</taxon>
        <taxon>Cucurbiteae</taxon>
        <taxon>Cucurbita</taxon>
    </lineage>
</organism>
<keyword id="KW-0329">Glyoxylate bypass</keyword>
<keyword id="KW-0330">Glyoxysome</keyword>
<keyword id="KW-0456">Lyase</keyword>
<keyword id="KW-0460">Magnesium</keyword>
<keyword id="KW-0479">Metal-binding</keyword>
<keyword id="KW-0576">Peroxisome</keyword>
<keyword id="KW-1185">Reference proteome</keyword>
<keyword id="KW-0816">Tricarboxylic acid cycle</keyword>
<dbReference type="EC" id="4.1.3.1" evidence="1"/>
<dbReference type="EMBL" id="D78256">
    <property type="protein sequence ID" value="BAA11320.1"/>
    <property type="molecule type" value="mRNA"/>
</dbReference>
<dbReference type="RefSeq" id="XP_022986274.1">
    <property type="nucleotide sequence ID" value="XM_023130506.1"/>
</dbReference>
<dbReference type="SMR" id="P93110"/>
<dbReference type="GeneID" id="111484071"/>
<dbReference type="OrthoDB" id="4078635at2759"/>
<dbReference type="UniPathway" id="UPA00703">
    <property type="reaction ID" value="UER00719"/>
</dbReference>
<dbReference type="Proteomes" id="UP000504608">
    <property type="component" value="Unplaced"/>
</dbReference>
<dbReference type="GO" id="GO:0009514">
    <property type="term" value="C:glyoxysome"/>
    <property type="evidence" value="ECO:0007669"/>
    <property type="project" value="UniProtKB-SubCell"/>
</dbReference>
<dbReference type="GO" id="GO:0004451">
    <property type="term" value="F:isocitrate lyase activity"/>
    <property type="evidence" value="ECO:0007669"/>
    <property type="project" value="UniProtKB-EC"/>
</dbReference>
<dbReference type="GO" id="GO:0046872">
    <property type="term" value="F:metal ion binding"/>
    <property type="evidence" value="ECO:0007669"/>
    <property type="project" value="UniProtKB-KW"/>
</dbReference>
<dbReference type="GO" id="GO:0006097">
    <property type="term" value="P:glyoxylate cycle"/>
    <property type="evidence" value="ECO:0007669"/>
    <property type="project" value="UniProtKB-UniPathway"/>
</dbReference>
<dbReference type="GO" id="GO:0006099">
    <property type="term" value="P:tricarboxylic acid cycle"/>
    <property type="evidence" value="ECO:0007669"/>
    <property type="project" value="UniProtKB-KW"/>
</dbReference>
<dbReference type="CDD" id="cd00377">
    <property type="entry name" value="ICL_PEPM"/>
    <property type="match status" value="1"/>
</dbReference>
<dbReference type="FunFam" id="1.10.10.850:FF:000001">
    <property type="entry name" value="Isocitrate lyase"/>
    <property type="match status" value="1"/>
</dbReference>
<dbReference type="Gene3D" id="1.10.10.850">
    <property type="match status" value="1"/>
</dbReference>
<dbReference type="Gene3D" id="3.20.20.60">
    <property type="entry name" value="Phosphoenolpyruvate-binding domains"/>
    <property type="match status" value="1"/>
</dbReference>
<dbReference type="InterPro" id="IPR039556">
    <property type="entry name" value="ICL/PEPM"/>
</dbReference>
<dbReference type="InterPro" id="IPR006254">
    <property type="entry name" value="Isocitrate_lyase"/>
</dbReference>
<dbReference type="InterPro" id="IPR018523">
    <property type="entry name" value="Isocitrate_lyase_ph_CS"/>
</dbReference>
<dbReference type="InterPro" id="IPR015813">
    <property type="entry name" value="Pyrv/PenolPyrv_kinase-like_dom"/>
</dbReference>
<dbReference type="InterPro" id="IPR040442">
    <property type="entry name" value="Pyrv_kinase-like_dom_sf"/>
</dbReference>
<dbReference type="NCBIfam" id="TIGR01346">
    <property type="entry name" value="isocit_lyase"/>
    <property type="match status" value="1"/>
</dbReference>
<dbReference type="PANTHER" id="PTHR21631:SF3">
    <property type="entry name" value="BIFUNCTIONAL GLYOXYLATE CYCLE PROTEIN"/>
    <property type="match status" value="1"/>
</dbReference>
<dbReference type="PANTHER" id="PTHR21631">
    <property type="entry name" value="ISOCITRATE LYASE/MALATE SYNTHASE"/>
    <property type="match status" value="1"/>
</dbReference>
<dbReference type="Pfam" id="PF00463">
    <property type="entry name" value="ICL"/>
    <property type="match status" value="1"/>
</dbReference>
<dbReference type="PIRSF" id="PIRSF001362">
    <property type="entry name" value="Isocit_lyase"/>
    <property type="match status" value="1"/>
</dbReference>
<dbReference type="SUPFAM" id="SSF51621">
    <property type="entry name" value="Phosphoenolpyruvate/pyruvate domain"/>
    <property type="match status" value="1"/>
</dbReference>
<dbReference type="PROSITE" id="PS00161">
    <property type="entry name" value="ISOCITRATE_LYASE"/>
    <property type="match status" value="1"/>
</dbReference>
<sequence length="576" mass="64359">MATSFSVPSMIMEEEGRFEAEVAEVQAWWNSERFKLTRRPYTAKDVVSLRGSLRQSYASNDLAKKLWRTLKTHQANSTASRTFGALDPVQVTMMAKHLDSIYVSGWQCSSTHTSTNEPGPDLADYPYDTVPNKVEHLFFAQQYHDRKQREARMSMSREERAKTPYVDYLKPIIADGDTGFGGTTATVKLCKLFVERGAAGVHIEDQSSVTKKCGHMAGKVLVAVSEHINRLVAARLQFDVMGVETVLVARTDAVAATLIQTNVDSRDHQFILGATNPNLRGKSLAGVLAEAMAAGKTGAELQALEDQWISMAQLKTFSECVTDAIMNSNGTESEKRRKLDEWMNHSSYEKCISNEQGREIAEKLGLKNLFWDWDLPRTREGFYRFKGSVMAAIVRGWAFAPHADLIWMETSSPDLVECTTFAKGVKSVHPEIMLAYNLSPSFNWDASGMSDKQMEEFIPTIARLGFCWQFITLAGFHADALVIDTFARDYARRGMLAYVERIQREERNNGVDTLAHQKWSGANYYDRYLKTVQGGISSTAAMGKGVTEEQFKESWTRAGAGNLGEEGSVVVAKSRM</sequence>
<accession>P93110</accession>
<name>ACEA_CUCMA</name>